<proteinExistence type="inferred from homology"/>
<accession>Q9K896</accession>
<comment type="catalytic activity">
    <reaction>
        <text>tRNA(Phe) + L-phenylalanine + ATP = L-phenylalanyl-tRNA(Phe) + AMP + diphosphate + H(+)</text>
        <dbReference type="Rhea" id="RHEA:19413"/>
        <dbReference type="Rhea" id="RHEA-COMP:9668"/>
        <dbReference type="Rhea" id="RHEA-COMP:9699"/>
        <dbReference type="ChEBI" id="CHEBI:15378"/>
        <dbReference type="ChEBI" id="CHEBI:30616"/>
        <dbReference type="ChEBI" id="CHEBI:33019"/>
        <dbReference type="ChEBI" id="CHEBI:58095"/>
        <dbReference type="ChEBI" id="CHEBI:78442"/>
        <dbReference type="ChEBI" id="CHEBI:78531"/>
        <dbReference type="ChEBI" id="CHEBI:456215"/>
        <dbReference type="EC" id="6.1.1.20"/>
    </reaction>
</comment>
<comment type="cofactor">
    <cofactor evidence="1">
        <name>Mg(2+)</name>
        <dbReference type="ChEBI" id="CHEBI:18420"/>
    </cofactor>
    <text evidence="1">Binds 2 magnesium ions per tetramer.</text>
</comment>
<comment type="subunit">
    <text evidence="1">Tetramer of two alpha and two beta subunits.</text>
</comment>
<comment type="subcellular location">
    <subcellularLocation>
        <location evidence="1">Cytoplasm</location>
    </subcellularLocation>
</comment>
<comment type="similarity">
    <text evidence="2">Belongs to the phenylalanyl-tRNA synthetase beta subunit family. Type 1 subfamily.</text>
</comment>
<sequence length="808" mass="89364">MLVSYQWLKQYVDLDGISAEEVAEKLTRGGIEVDIIHDLNQGATGVVVGHVLECRQHPNADKLNLCQVEIGEEEPVQIVCGAPNVAAGQKVAVAKVGAVLPGNFKIKKAKLRGELSQGMICSLQELGVENKFVQKEFADGIYVFSDDVEIGSDALEALNRYDQVLELDLTPNRSDCLNMYGVAYEVAALFDKEVHWPTAESSGTDGQASDYVSVEIEDIEKNPYYGATIIKNVKVGPSPLWLQNRLIAAGIRPISNVVDVTNYVLLEYGQPLHAFDYDRLGSNKVVTRLAKEGEKMVTLDDVERTLQADHLLITNGRDPVAIAGVMGGATSEVQEDTTTVLLEAAYFDPATVRKASRDLGLRSDSSSRFEKGVDPKRVREAAARAATLIAEVAGGTVVGGVVEAGELAIEEPVVSLNLPHMNQRLGMELSHDEVAAIFDRLGFAYTVENDTFEVTAPSRRGDIRIEEDLFEEVARLYGYDNIPTTFPVGGTTRGGLTDYQQKRRKIRRYLEGAGLFEVMTYSLTSEEKEKGLQGENEDYLPIRVAMPMSEERSTMRTSLVPHLLDVVQYNLNRKQEALFIYELGSVFLSKEETLTKQPEEREMLAGALTGFWTEHLWQGEKKAVDFFVVKGILEGMFAELGLSEKVTFERGEQPGMHPGRTANVKVNGRAVGFAGQIHPERQSELDLKETYVFQLDVESLLTEEGTEVAYEPLPRFPAISRDIALVVDENVTAAQLQQVIEANGGEWLKHVYLFDLYEGEHMEAGKKSIAFSLTYFDPERTLTDEEVTAVHEQILKELEASTGAVLRG</sequence>
<evidence type="ECO:0000250" key="1"/>
<evidence type="ECO:0000305" key="2"/>
<feature type="chain" id="PRO_0000126841" description="Phenylalanine--tRNA ligase beta subunit">
    <location>
        <begin position="1"/>
        <end position="808"/>
    </location>
</feature>
<feature type="domain" description="tRNA-binding">
    <location>
        <begin position="40"/>
        <end position="155"/>
    </location>
</feature>
<feature type="domain" description="B5">
    <location>
        <begin position="409"/>
        <end position="484"/>
    </location>
</feature>
<feature type="domain" description="FDX-ACB">
    <location>
        <begin position="714"/>
        <end position="807"/>
    </location>
</feature>
<feature type="binding site" evidence="1">
    <location>
        <position position="462"/>
    </location>
    <ligand>
        <name>Mg(2+)</name>
        <dbReference type="ChEBI" id="CHEBI:18420"/>
        <note>shared with alpha subunit</note>
    </ligand>
</feature>
<feature type="binding site" evidence="1">
    <location>
        <position position="468"/>
    </location>
    <ligand>
        <name>Mg(2+)</name>
        <dbReference type="ChEBI" id="CHEBI:18420"/>
        <note>shared with alpha subunit</note>
    </ligand>
</feature>
<feature type="binding site" evidence="1">
    <location>
        <position position="471"/>
    </location>
    <ligand>
        <name>Mg(2+)</name>
        <dbReference type="ChEBI" id="CHEBI:18420"/>
        <note>shared with alpha subunit</note>
    </ligand>
</feature>
<feature type="binding site" evidence="1">
    <location>
        <position position="472"/>
    </location>
    <ligand>
        <name>Mg(2+)</name>
        <dbReference type="ChEBI" id="CHEBI:18420"/>
        <note>shared with alpha subunit</note>
    </ligand>
</feature>
<keyword id="KW-0030">Aminoacyl-tRNA synthetase</keyword>
<keyword id="KW-0067">ATP-binding</keyword>
<keyword id="KW-0963">Cytoplasm</keyword>
<keyword id="KW-0436">Ligase</keyword>
<keyword id="KW-0460">Magnesium</keyword>
<keyword id="KW-0479">Metal-binding</keyword>
<keyword id="KW-0547">Nucleotide-binding</keyword>
<keyword id="KW-0648">Protein biosynthesis</keyword>
<keyword id="KW-1185">Reference proteome</keyword>
<keyword id="KW-0694">RNA-binding</keyword>
<keyword id="KW-0820">tRNA-binding</keyword>
<gene>
    <name type="primary">pheT</name>
    <name type="ordered locus">BH3110</name>
</gene>
<protein>
    <recommendedName>
        <fullName>Phenylalanine--tRNA ligase beta subunit</fullName>
        <ecNumber>6.1.1.20</ecNumber>
    </recommendedName>
    <alternativeName>
        <fullName>Phenylalanyl-tRNA synthetase beta subunit</fullName>
        <shortName>PheRS</shortName>
    </alternativeName>
</protein>
<organism>
    <name type="scientific">Halalkalibacterium halodurans (strain ATCC BAA-125 / DSM 18197 / FERM 7344 / JCM 9153 / C-125)</name>
    <name type="common">Bacillus halodurans</name>
    <dbReference type="NCBI Taxonomy" id="272558"/>
    <lineage>
        <taxon>Bacteria</taxon>
        <taxon>Bacillati</taxon>
        <taxon>Bacillota</taxon>
        <taxon>Bacilli</taxon>
        <taxon>Bacillales</taxon>
        <taxon>Bacillaceae</taxon>
        <taxon>Halalkalibacterium (ex Joshi et al. 2022)</taxon>
    </lineage>
</organism>
<name>SYFB_HALH5</name>
<dbReference type="EC" id="6.1.1.20"/>
<dbReference type="EMBL" id="BA000004">
    <property type="protein sequence ID" value="BAB06829.1"/>
    <property type="molecule type" value="Genomic_DNA"/>
</dbReference>
<dbReference type="PIR" id="F84038">
    <property type="entry name" value="F84038"/>
</dbReference>
<dbReference type="RefSeq" id="WP_010899254.1">
    <property type="nucleotide sequence ID" value="NC_002570.2"/>
</dbReference>
<dbReference type="SMR" id="Q9K896"/>
<dbReference type="STRING" id="272558.gene:10729022"/>
<dbReference type="KEGG" id="bha:BH3110"/>
<dbReference type="eggNOG" id="COG0072">
    <property type="taxonomic scope" value="Bacteria"/>
</dbReference>
<dbReference type="eggNOG" id="COG0073">
    <property type="taxonomic scope" value="Bacteria"/>
</dbReference>
<dbReference type="HOGENOM" id="CLU_016891_0_0_9"/>
<dbReference type="OrthoDB" id="9805455at2"/>
<dbReference type="Proteomes" id="UP000001258">
    <property type="component" value="Chromosome"/>
</dbReference>
<dbReference type="GO" id="GO:0009328">
    <property type="term" value="C:phenylalanine-tRNA ligase complex"/>
    <property type="evidence" value="ECO:0007669"/>
    <property type="project" value="TreeGrafter"/>
</dbReference>
<dbReference type="GO" id="GO:0005524">
    <property type="term" value="F:ATP binding"/>
    <property type="evidence" value="ECO:0007669"/>
    <property type="project" value="UniProtKB-UniRule"/>
</dbReference>
<dbReference type="GO" id="GO:0140096">
    <property type="term" value="F:catalytic activity, acting on a protein"/>
    <property type="evidence" value="ECO:0007669"/>
    <property type="project" value="UniProtKB-ARBA"/>
</dbReference>
<dbReference type="GO" id="GO:0000287">
    <property type="term" value="F:magnesium ion binding"/>
    <property type="evidence" value="ECO:0007669"/>
    <property type="project" value="UniProtKB-UniRule"/>
</dbReference>
<dbReference type="GO" id="GO:0004826">
    <property type="term" value="F:phenylalanine-tRNA ligase activity"/>
    <property type="evidence" value="ECO:0007669"/>
    <property type="project" value="UniProtKB-UniRule"/>
</dbReference>
<dbReference type="GO" id="GO:0016740">
    <property type="term" value="F:transferase activity"/>
    <property type="evidence" value="ECO:0007669"/>
    <property type="project" value="UniProtKB-ARBA"/>
</dbReference>
<dbReference type="GO" id="GO:0000049">
    <property type="term" value="F:tRNA binding"/>
    <property type="evidence" value="ECO:0007669"/>
    <property type="project" value="UniProtKB-KW"/>
</dbReference>
<dbReference type="GO" id="GO:0006432">
    <property type="term" value="P:phenylalanyl-tRNA aminoacylation"/>
    <property type="evidence" value="ECO:0007669"/>
    <property type="project" value="UniProtKB-UniRule"/>
</dbReference>
<dbReference type="CDD" id="cd00769">
    <property type="entry name" value="PheRS_beta_core"/>
    <property type="match status" value="1"/>
</dbReference>
<dbReference type="CDD" id="cd02796">
    <property type="entry name" value="tRNA_bind_bactPheRS"/>
    <property type="match status" value="1"/>
</dbReference>
<dbReference type="FunFam" id="2.40.50.140:FF:000045">
    <property type="entry name" value="Phenylalanine--tRNA ligase beta subunit"/>
    <property type="match status" value="1"/>
</dbReference>
<dbReference type="FunFam" id="3.30.56.10:FF:000002">
    <property type="entry name" value="Phenylalanine--tRNA ligase beta subunit"/>
    <property type="match status" value="1"/>
</dbReference>
<dbReference type="FunFam" id="3.30.70.380:FF:000001">
    <property type="entry name" value="Phenylalanine--tRNA ligase beta subunit"/>
    <property type="match status" value="1"/>
</dbReference>
<dbReference type="FunFam" id="3.30.930.10:FF:000022">
    <property type="entry name" value="Phenylalanine--tRNA ligase beta subunit"/>
    <property type="match status" value="1"/>
</dbReference>
<dbReference type="FunFam" id="3.50.40.10:FF:000001">
    <property type="entry name" value="Phenylalanine--tRNA ligase beta subunit"/>
    <property type="match status" value="1"/>
</dbReference>
<dbReference type="Gene3D" id="3.30.56.10">
    <property type="match status" value="2"/>
</dbReference>
<dbReference type="Gene3D" id="3.30.930.10">
    <property type="entry name" value="Bira Bifunctional Protein, Domain 2"/>
    <property type="match status" value="1"/>
</dbReference>
<dbReference type="Gene3D" id="3.30.70.380">
    <property type="entry name" value="Ferrodoxin-fold anticodon-binding domain"/>
    <property type="match status" value="1"/>
</dbReference>
<dbReference type="Gene3D" id="2.40.50.140">
    <property type="entry name" value="Nucleic acid-binding proteins"/>
    <property type="match status" value="1"/>
</dbReference>
<dbReference type="Gene3D" id="3.50.40.10">
    <property type="entry name" value="Phenylalanyl-trna Synthetase, Chain B, domain 3"/>
    <property type="match status" value="1"/>
</dbReference>
<dbReference type="HAMAP" id="MF_00283">
    <property type="entry name" value="Phe_tRNA_synth_beta1"/>
    <property type="match status" value="1"/>
</dbReference>
<dbReference type="InterPro" id="IPR045864">
    <property type="entry name" value="aa-tRNA-synth_II/BPL/LPL"/>
</dbReference>
<dbReference type="InterPro" id="IPR005146">
    <property type="entry name" value="B3/B4_tRNA-bd"/>
</dbReference>
<dbReference type="InterPro" id="IPR009061">
    <property type="entry name" value="DNA-bd_dom_put_sf"/>
</dbReference>
<dbReference type="InterPro" id="IPR005121">
    <property type="entry name" value="Fdx_antiC-bd"/>
</dbReference>
<dbReference type="InterPro" id="IPR036690">
    <property type="entry name" value="Fdx_antiC-bd_sf"/>
</dbReference>
<dbReference type="InterPro" id="IPR012340">
    <property type="entry name" value="NA-bd_OB-fold"/>
</dbReference>
<dbReference type="InterPro" id="IPR045060">
    <property type="entry name" value="Phe-tRNA-ligase_IIc_bsu"/>
</dbReference>
<dbReference type="InterPro" id="IPR004532">
    <property type="entry name" value="Phe-tRNA-ligase_IIc_bsu_bact"/>
</dbReference>
<dbReference type="InterPro" id="IPR020825">
    <property type="entry name" value="Phe-tRNA_synthase-like_B3/B4"/>
</dbReference>
<dbReference type="InterPro" id="IPR041616">
    <property type="entry name" value="PheRS_beta_core"/>
</dbReference>
<dbReference type="InterPro" id="IPR002547">
    <property type="entry name" value="tRNA-bd_dom"/>
</dbReference>
<dbReference type="InterPro" id="IPR033714">
    <property type="entry name" value="tRNA_bind_bactPheRS"/>
</dbReference>
<dbReference type="InterPro" id="IPR005147">
    <property type="entry name" value="tRNA_synthase_B5-dom"/>
</dbReference>
<dbReference type="NCBIfam" id="TIGR00472">
    <property type="entry name" value="pheT_bact"/>
    <property type="match status" value="1"/>
</dbReference>
<dbReference type="NCBIfam" id="NF045760">
    <property type="entry name" value="YtpR"/>
    <property type="match status" value="1"/>
</dbReference>
<dbReference type="PANTHER" id="PTHR10947:SF0">
    <property type="entry name" value="PHENYLALANINE--TRNA LIGASE BETA SUBUNIT"/>
    <property type="match status" value="1"/>
</dbReference>
<dbReference type="PANTHER" id="PTHR10947">
    <property type="entry name" value="PHENYLALANYL-TRNA SYNTHETASE BETA CHAIN AND LEUCINE-RICH REPEAT-CONTAINING PROTEIN 47"/>
    <property type="match status" value="1"/>
</dbReference>
<dbReference type="Pfam" id="PF03483">
    <property type="entry name" value="B3_4"/>
    <property type="match status" value="1"/>
</dbReference>
<dbReference type="Pfam" id="PF03484">
    <property type="entry name" value="B5"/>
    <property type="match status" value="1"/>
</dbReference>
<dbReference type="Pfam" id="PF03147">
    <property type="entry name" value="FDX-ACB"/>
    <property type="match status" value="1"/>
</dbReference>
<dbReference type="Pfam" id="PF01588">
    <property type="entry name" value="tRNA_bind"/>
    <property type="match status" value="1"/>
</dbReference>
<dbReference type="Pfam" id="PF17759">
    <property type="entry name" value="tRNA_synthFbeta"/>
    <property type="match status" value="1"/>
</dbReference>
<dbReference type="SMART" id="SM00873">
    <property type="entry name" value="B3_4"/>
    <property type="match status" value="1"/>
</dbReference>
<dbReference type="SMART" id="SM00874">
    <property type="entry name" value="B5"/>
    <property type="match status" value="1"/>
</dbReference>
<dbReference type="SMART" id="SM00896">
    <property type="entry name" value="FDX-ACB"/>
    <property type="match status" value="1"/>
</dbReference>
<dbReference type="SUPFAM" id="SSF54991">
    <property type="entry name" value="Anticodon-binding domain of PheRS"/>
    <property type="match status" value="1"/>
</dbReference>
<dbReference type="SUPFAM" id="SSF55681">
    <property type="entry name" value="Class II aaRS and biotin synthetases"/>
    <property type="match status" value="1"/>
</dbReference>
<dbReference type="SUPFAM" id="SSF50249">
    <property type="entry name" value="Nucleic acid-binding proteins"/>
    <property type="match status" value="1"/>
</dbReference>
<dbReference type="SUPFAM" id="SSF56037">
    <property type="entry name" value="PheT/TilS domain"/>
    <property type="match status" value="1"/>
</dbReference>
<dbReference type="SUPFAM" id="SSF46955">
    <property type="entry name" value="Putative DNA-binding domain"/>
    <property type="match status" value="1"/>
</dbReference>
<dbReference type="PROSITE" id="PS51483">
    <property type="entry name" value="B5"/>
    <property type="match status" value="1"/>
</dbReference>
<dbReference type="PROSITE" id="PS51447">
    <property type="entry name" value="FDX_ACB"/>
    <property type="match status" value="1"/>
</dbReference>
<dbReference type="PROSITE" id="PS50886">
    <property type="entry name" value="TRBD"/>
    <property type="match status" value="1"/>
</dbReference>
<reference key="1">
    <citation type="journal article" date="2000" name="Nucleic Acids Res.">
        <title>Complete genome sequence of the alkaliphilic bacterium Bacillus halodurans and genomic sequence comparison with Bacillus subtilis.</title>
        <authorList>
            <person name="Takami H."/>
            <person name="Nakasone K."/>
            <person name="Takaki Y."/>
            <person name="Maeno G."/>
            <person name="Sasaki R."/>
            <person name="Masui N."/>
            <person name="Fuji F."/>
            <person name="Hirama C."/>
            <person name="Nakamura Y."/>
            <person name="Ogasawara N."/>
            <person name="Kuhara S."/>
            <person name="Horikoshi K."/>
        </authorList>
    </citation>
    <scope>NUCLEOTIDE SEQUENCE [LARGE SCALE GENOMIC DNA]</scope>
    <source>
        <strain>ATCC BAA-125 / DSM 18197 / FERM 7344 / JCM 9153 / C-125</strain>
    </source>
</reference>